<feature type="chain" id="PRO_0000163141" description="DNA-directed RNA polymerase subunit epsilon">
    <location>
        <begin position="1"/>
        <end position="72"/>
    </location>
</feature>
<sequence>MAVFKVFFQHNKDEVIVRENTNTIYVEGETEEQVRRYLKDRNYNIEFITKLEGAHLEYEKEHSDHFNVENAQ</sequence>
<protein>
    <recommendedName>
        <fullName evidence="1">DNA-directed RNA polymerase subunit epsilon</fullName>
        <shortName evidence="1">RNAP epsilon subunit</shortName>
        <ecNumber evidence="1">2.7.7.6</ecNumber>
    </recommendedName>
    <alternativeName>
        <fullName evidence="1">RNA polymerase epsilon subunit</fullName>
    </alternativeName>
    <alternativeName>
        <fullName evidence="1">Transcriptase subunit epsilon</fullName>
    </alternativeName>
</protein>
<proteinExistence type="inferred from homology"/>
<gene>
    <name evidence="1" type="primary">rpoY</name>
    <name type="ordered locus">SH1862</name>
</gene>
<evidence type="ECO:0000255" key="1">
    <source>
        <dbReference type="HAMAP-Rule" id="MF_01553"/>
    </source>
</evidence>
<comment type="function">
    <text evidence="1">A non-essential component of RNA polymerase (RNAP).</text>
</comment>
<comment type="catalytic activity">
    <reaction evidence="1">
        <text>RNA(n) + a ribonucleoside 5'-triphosphate = RNA(n+1) + diphosphate</text>
        <dbReference type="Rhea" id="RHEA:21248"/>
        <dbReference type="Rhea" id="RHEA-COMP:14527"/>
        <dbReference type="Rhea" id="RHEA-COMP:17342"/>
        <dbReference type="ChEBI" id="CHEBI:33019"/>
        <dbReference type="ChEBI" id="CHEBI:61557"/>
        <dbReference type="ChEBI" id="CHEBI:140395"/>
        <dbReference type="EC" id="2.7.7.6"/>
    </reaction>
</comment>
<comment type="subunit">
    <text evidence="1">RNAP is composed of a core of 2 alpha, a beta and a beta' subunit. The core is associated with a delta subunit, and at least one of epsilon or omega. When a sigma factor is associated with the core the holoenzyme is formed, which can initiate transcription.</text>
</comment>
<comment type="similarity">
    <text evidence="1">Belongs to the RNA polymerase subunit epsilon family.</text>
</comment>
<keyword id="KW-0240">DNA-directed RNA polymerase</keyword>
<keyword id="KW-0548">Nucleotidyltransferase</keyword>
<keyword id="KW-0804">Transcription</keyword>
<keyword id="KW-0808">Transferase</keyword>
<organism>
    <name type="scientific">Staphylococcus haemolyticus (strain JCSC1435)</name>
    <dbReference type="NCBI Taxonomy" id="279808"/>
    <lineage>
        <taxon>Bacteria</taxon>
        <taxon>Bacillati</taxon>
        <taxon>Bacillota</taxon>
        <taxon>Bacilli</taxon>
        <taxon>Bacillales</taxon>
        <taxon>Staphylococcaceae</taxon>
        <taxon>Staphylococcus</taxon>
    </lineage>
</organism>
<dbReference type="EC" id="2.7.7.6" evidence="1"/>
<dbReference type="EMBL" id="AP006716">
    <property type="protein sequence ID" value="BAE05171.1"/>
    <property type="molecule type" value="Genomic_DNA"/>
</dbReference>
<dbReference type="RefSeq" id="WP_002448185.1">
    <property type="nucleotide sequence ID" value="NC_007168.1"/>
</dbReference>
<dbReference type="SMR" id="Q4L5A4"/>
<dbReference type="KEGG" id="sha:SH1862"/>
<dbReference type="eggNOG" id="COG5503">
    <property type="taxonomic scope" value="Bacteria"/>
</dbReference>
<dbReference type="HOGENOM" id="CLU_187518_1_0_9"/>
<dbReference type="OrthoDB" id="2147503at2"/>
<dbReference type="Proteomes" id="UP000000543">
    <property type="component" value="Chromosome"/>
</dbReference>
<dbReference type="GO" id="GO:0000428">
    <property type="term" value="C:DNA-directed RNA polymerase complex"/>
    <property type="evidence" value="ECO:0007669"/>
    <property type="project" value="UniProtKB-KW"/>
</dbReference>
<dbReference type="GO" id="GO:0003677">
    <property type="term" value="F:DNA binding"/>
    <property type="evidence" value="ECO:0007669"/>
    <property type="project" value="UniProtKB-UniRule"/>
</dbReference>
<dbReference type="GO" id="GO:0003899">
    <property type="term" value="F:DNA-directed RNA polymerase activity"/>
    <property type="evidence" value="ECO:0007669"/>
    <property type="project" value="UniProtKB-UniRule"/>
</dbReference>
<dbReference type="GO" id="GO:0006351">
    <property type="term" value="P:DNA-templated transcription"/>
    <property type="evidence" value="ECO:0007669"/>
    <property type="project" value="UniProtKB-UniRule"/>
</dbReference>
<dbReference type="Gene3D" id="3.10.20.730">
    <property type="entry name" value="RNAP, epsilon subunit-like"/>
    <property type="match status" value="1"/>
</dbReference>
<dbReference type="HAMAP" id="MF_01553">
    <property type="entry name" value="RNApol_bact_RpoY"/>
    <property type="match status" value="1"/>
</dbReference>
<dbReference type="InterPro" id="IPR009907">
    <property type="entry name" value="RpoY"/>
</dbReference>
<dbReference type="NCBIfam" id="NF010188">
    <property type="entry name" value="PRK13667.1"/>
    <property type="match status" value="1"/>
</dbReference>
<dbReference type="Pfam" id="PF07288">
    <property type="entry name" value="RpoY"/>
    <property type="match status" value="1"/>
</dbReference>
<reference key="1">
    <citation type="journal article" date="2005" name="J. Bacteriol.">
        <title>Whole-genome sequencing of Staphylococcus haemolyticus uncovers the extreme plasticity of its genome and the evolution of human-colonizing staphylococcal species.</title>
        <authorList>
            <person name="Takeuchi F."/>
            <person name="Watanabe S."/>
            <person name="Baba T."/>
            <person name="Yuzawa H."/>
            <person name="Ito T."/>
            <person name="Morimoto Y."/>
            <person name="Kuroda M."/>
            <person name="Cui L."/>
            <person name="Takahashi M."/>
            <person name="Ankai A."/>
            <person name="Baba S."/>
            <person name="Fukui S."/>
            <person name="Lee J.C."/>
            <person name="Hiramatsu K."/>
        </authorList>
    </citation>
    <scope>NUCLEOTIDE SEQUENCE [LARGE SCALE GENOMIC DNA]</scope>
    <source>
        <strain>JCSC1435</strain>
    </source>
</reference>
<name>RPOY_STAHJ</name>
<accession>Q4L5A4</accession>